<comment type="function">
    <text evidence="2">Component of the ubiquinol-cytochrome c reductase complex (complex III or cytochrome b-c1 complex) that is part of the mitochondrial respiratory chain. The b-c1 complex mediates electron transfer from ubiquinol to cytochrome c. Contributes to the generation of a proton gradient across the mitochondrial membrane that is then used for ATP synthesis.</text>
</comment>
<comment type="cofactor">
    <cofactor evidence="2">
        <name>heme b</name>
        <dbReference type="ChEBI" id="CHEBI:60344"/>
    </cofactor>
    <text evidence="2">Binds 2 heme b groups non-covalently.</text>
</comment>
<comment type="subunit">
    <text evidence="2">The cytochrome bc1 complex contains 11 subunits: 3 respiratory subunits (MT-CYB, CYC1 and UQCRFS1), 2 core proteins (UQCRC1 and UQCRC2) and 6 low-molecular weight proteins (UQCRH/QCR6, UQCRB/QCR7, UQCRQ/QCR8, UQCR10/QCR9, UQCR11/QCR10 and a cleavage product of UQCRFS1). This cytochrome bc1 complex then forms a dimer.</text>
</comment>
<comment type="subcellular location">
    <subcellularLocation>
        <location evidence="2">Mitochondrion inner membrane</location>
        <topology evidence="2">Multi-pass membrane protein</topology>
    </subcellularLocation>
</comment>
<comment type="miscellaneous">
    <text evidence="1">Heme 1 (or BL or b562) is low-potential and absorbs at about 562 nm, and heme 2 (or BH or b566) is high-potential and absorbs at about 566 nm.</text>
</comment>
<comment type="similarity">
    <text evidence="3 4">Belongs to the cytochrome b family.</text>
</comment>
<comment type="caution">
    <text evidence="2">The full-length protein contains only eight transmembrane helices, not nine as predicted by bioinformatics tools.</text>
</comment>
<gene>
    <name type="primary">MT-CYB</name>
    <name type="synonym">COB</name>
    <name type="synonym">CYTB</name>
    <name type="synonym">MTCYB</name>
</gene>
<dbReference type="EMBL" id="AF076056">
    <property type="protein sequence ID" value="AAC68613.1"/>
    <property type="molecule type" value="Genomic_DNA"/>
</dbReference>
<dbReference type="SMR" id="O79203"/>
<dbReference type="GO" id="GO:0005743">
    <property type="term" value="C:mitochondrial inner membrane"/>
    <property type="evidence" value="ECO:0007669"/>
    <property type="project" value="UniProtKB-SubCell"/>
</dbReference>
<dbReference type="GO" id="GO:0045275">
    <property type="term" value="C:respiratory chain complex III"/>
    <property type="evidence" value="ECO:0007669"/>
    <property type="project" value="InterPro"/>
</dbReference>
<dbReference type="GO" id="GO:0046872">
    <property type="term" value="F:metal ion binding"/>
    <property type="evidence" value="ECO:0007669"/>
    <property type="project" value="UniProtKB-KW"/>
</dbReference>
<dbReference type="GO" id="GO:0008121">
    <property type="term" value="F:ubiquinol-cytochrome-c reductase activity"/>
    <property type="evidence" value="ECO:0007669"/>
    <property type="project" value="InterPro"/>
</dbReference>
<dbReference type="GO" id="GO:0006122">
    <property type="term" value="P:mitochondrial electron transport, ubiquinol to cytochrome c"/>
    <property type="evidence" value="ECO:0007669"/>
    <property type="project" value="TreeGrafter"/>
</dbReference>
<dbReference type="CDD" id="cd00290">
    <property type="entry name" value="cytochrome_b_C"/>
    <property type="match status" value="1"/>
</dbReference>
<dbReference type="CDD" id="cd00284">
    <property type="entry name" value="Cytochrome_b_N"/>
    <property type="match status" value="1"/>
</dbReference>
<dbReference type="FunFam" id="1.20.810.10:FF:000002">
    <property type="entry name" value="Cytochrome b"/>
    <property type="match status" value="1"/>
</dbReference>
<dbReference type="Gene3D" id="1.20.810.10">
    <property type="entry name" value="Cytochrome Bc1 Complex, Chain C"/>
    <property type="match status" value="1"/>
</dbReference>
<dbReference type="InterPro" id="IPR005798">
    <property type="entry name" value="Cyt_b/b6_C"/>
</dbReference>
<dbReference type="InterPro" id="IPR036150">
    <property type="entry name" value="Cyt_b/b6_C_sf"/>
</dbReference>
<dbReference type="InterPro" id="IPR005797">
    <property type="entry name" value="Cyt_b/b6_N"/>
</dbReference>
<dbReference type="InterPro" id="IPR027387">
    <property type="entry name" value="Cytb/b6-like_sf"/>
</dbReference>
<dbReference type="InterPro" id="IPR030689">
    <property type="entry name" value="Cytochrome_b"/>
</dbReference>
<dbReference type="InterPro" id="IPR048260">
    <property type="entry name" value="Cytochrome_b_C_euk/bac"/>
</dbReference>
<dbReference type="InterPro" id="IPR048259">
    <property type="entry name" value="Cytochrome_b_N_euk/bac"/>
</dbReference>
<dbReference type="InterPro" id="IPR016174">
    <property type="entry name" value="Di-haem_cyt_TM"/>
</dbReference>
<dbReference type="PANTHER" id="PTHR19271">
    <property type="entry name" value="CYTOCHROME B"/>
    <property type="match status" value="1"/>
</dbReference>
<dbReference type="PANTHER" id="PTHR19271:SF16">
    <property type="entry name" value="CYTOCHROME B"/>
    <property type="match status" value="1"/>
</dbReference>
<dbReference type="Pfam" id="PF00032">
    <property type="entry name" value="Cytochrom_B_C"/>
    <property type="match status" value="1"/>
</dbReference>
<dbReference type="Pfam" id="PF00033">
    <property type="entry name" value="Cytochrome_B"/>
    <property type="match status" value="1"/>
</dbReference>
<dbReference type="PIRSF" id="PIRSF038885">
    <property type="entry name" value="COB"/>
    <property type="match status" value="1"/>
</dbReference>
<dbReference type="SUPFAM" id="SSF81648">
    <property type="entry name" value="a domain/subunit of cytochrome bc1 complex (Ubiquinol-cytochrome c reductase)"/>
    <property type="match status" value="1"/>
</dbReference>
<dbReference type="SUPFAM" id="SSF81342">
    <property type="entry name" value="Transmembrane di-heme cytochromes"/>
    <property type="match status" value="1"/>
</dbReference>
<dbReference type="PROSITE" id="PS51003">
    <property type="entry name" value="CYTB_CTER"/>
    <property type="match status" value="1"/>
</dbReference>
<dbReference type="PROSITE" id="PS51002">
    <property type="entry name" value="CYTB_NTER"/>
    <property type="match status" value="1"/>
</dbReference>
<organism>
    <name type="scientific">Garrodia nereis</name>
    <name type="common">Grey-backed storm-petrel</name>
    <name type="synonym">Oceanites nereis</name>
    <dbReference type="NCBI Taxonomy" id="79649"/>
    <lineage>
        <taxon>Eukaryota</taxon>
        <taxon>Metazoa</taxon>
        <taxon>Chordata</taxon>
        <taxon>Craniata</taxon>
        <taxon>Vertebrata</taxon>
        <taxon>Euteleostomi</taxon>
        <taxon>Archelosauria</taxon>
        <taxon>Archosauria</taxon>
        <taxon>Dinosauria</taxon>
        <taxon>Saurischia</taxon>
        <taxon>Theropoda</taxon>
        <taxon>Coelurosauria</taxon>
        <taxon>Aves</taxon>
        <taxon>Neognathae</taxon>
        <taxon>Neoaves</taxon>
        <taxon>Aequornithes</taxon>
        <taxon>Procellariiformes</taxon>
        <taxon>Hydrobatidae</taxon>
        <taxon>Garrodia</taxon>
    </lineage>
</organism>
<feature type="chain" id="PRO_0000060993" description="Cytochrome b">
    <location>
        <begin position="1"/>
        <end position="380"/>
    </location>
</feature>
<feature type="transmembrane region" description="Helical" evidence="2">
    <location>
        <begin position="34"/>
        <end position="54"/>
    </location>
</feature>
<feature type="transmembrane region" description="Helical" evidence="2">
    <location>
        <begin position="78"/>
        <end position="99"/>
    </location>
</feature>
<feature type="transmembrane region" description="Helical" evidence="2">
    <location>
        <begin position="114"/>
        <end position="134"/>
    </location>
</feature>
<feature type="transmembrane region" description="Helical" evidence="2">
    <location>
        <begin position="179"/>
        <end position="199"/>
    </location>
</feature>
<feature type="transmembrane region" description="Helical" evidence="2">
    <location>
        <begin position="227"/>
        <end position="247"/>
    </location>
</feature>
<feature type="transmembrane region" description="Helical" evidence="2">
    <location>
        <begin position="289"/>
        <end position="309"/>
    </location>
</feature>
<feature type="transmembrane region" description="Helical" evidence="2">
    <location>
        <begin position="321"/>
        <end position="341"/>
    </location>
</feature>
<feature type="transmembrane region" description="Helical" evidence="2">
    <location>
        <begin position="348"/>
        <end position="368"/>
    </location>
</feature>
<feature type="binding site" description="axial binding residue" evidence="2">
    <location>
        <position position="84"/>
    </location>
    <ligand>
        <name>heme b</name>
        <dbReference type="ChEBI" id="CHEBI:60344"/>
        <label>b562</label>
    </ligand>
    <ligandPart>
        <name>Fe</name>
        <dbReference type="ChEBI" id="CHEBI:18248"/>
    </ligandPart>
</feature>
<feature type="binding site" description="axial binding residue" evidence="2">
    <location>
        <position position="98"/>
    </location>
    <ligand>
        <name>heme b</name>
        <dbReference type="ChEBI" id="CHEBI:60344"/>
        <label>b566</label>
    </ligand>
    <ligandPart>
        <name>Fe</name>
        <dbReference type="ChEBI" id="CHEBI:18248"/>
    </ligandPart>
</feature>
<feature type="binding site" description="axial binding residue" evidence="2">
    <location>
        <position position="183"/>
    </location>
    <ligand>
        <name>heme b</name>
        <dbReference type="ChEBI" id="CHEBI:60344"/>
        <label>b562</label>
    </ligand>
    <ligandPart>
        <name>Fe</name>
        <dbReference type="ChEBI" id="CHEBI:18248"/>
    </ligandPart>
</feature>
<feature type="binding site" description="axial binding residue" evidence="2">
    <location>
        <position position="197"/>
    </location>
    <ligand>
        <name>heme b</name>
        <dbReference type="ChEBI" id="CHEBI:60344"/>
        <label>b566</label>
    </ligand>
    <ligandPart>
        <name>Fe</name>
        <dbReference type="ChEBI" id="CHEBI:18248"/>
    </ligandPart>
</feature>
<feature type="binding site" evidence="2">
    <location>
        <position position="202"/>
    </location>
    <ligand>
        <name>a ubiquinone</name>
        <dbReference type="ChEBI" id="CHEBI:16389"/>
    </ligand>
</feature>
<name>CYB_GARNE</name>
<protein>
    <recommendedName>
        <fullName>Cytochrome b</fullName>
    </recommendedName>
    <alternativeName>
        <fullName>Complex III subunit 3</fullName>
    </alternativeName>
    <alternativeName>
        <fullName>Complex III subunit III</fullName>
    </alternativeName>
    <alternativeName>
        <fullName>Cytochrome b-c1 complex subunit 3</fullName>
    </alternativeName>
    <alternativeName>
        <fullName>Ubiquinol-cytochrome-c reductase complex cytochrome b subunit</fullName>
    </alternativeName>
</protein>
<accession>O79203</accession>
<sequence length="380" mass="42686">MAPNLRKSHPLLKMINNSLIDLPTPSNISAWWNFGSLLGLCLVTQILTGLLLATHYTADTTLAFSSVTHTCRNVQYGWLIRNLHANGASFFFICIYLHIGRGLYYGSYLYKETWNTGILLLLTLMATAFVGYVLPWGQMSFWGATVITNLFSAIPYIGQTIVEWAWGGFSVDNPTLTRFFALHFLLPFMIAGLTLIHLTFLHESGSNNPLGLVSNCDKIPFHPYFSLKDTLGFMFMLFLLTTLALFSPNLLGDPENFTPANPLVTPPHIKPEWYFLFAYAILRSIPNKLGGVLALAASVLILFLSPLLHKSKQRTMAFRPFSQFLFWLLIANLLILTWVGSQPVEHPFIIIGQLASLTYFTILLILLPITGALENKMLNY</sequence>
<proteinExistence type="inferred from homology"/>
<geneLocation type="mitochondrion"/>
<keyword id="KW-0249">Electron transport</keyword>
<keyword id="KW-0349">Heme</keyword>
<keyword id="KW-0408">Iron</keyword>
<keyword id="KW-0472">Membrane</keyword>
<keyword id="KW-0479">Metal-binding</keyword>
<keyword id="KW-0496">Mitochondrion</keyword>
<keyword id="KW-0999">Mitochondrion inner membrane</keyword>
<keyword id="KW-0679">Respiratory chain</keyword>
<keyword id="KW-0812">Transmembrane</keyword>
<keyword id="KW-1133">Transmembrane helix</keyword>
<keyword id="KW-0813">Transport</keyword>
<keyword id="KW-0830">Ubiquinone</keyword>
<evidence type="ECO:0000250" key="1"/>
<evidence type="ECO:0000250" key="2">
    <source>
        <dbReference type="UniProtKB" id="P00157"/>
    </source>
</evidence>
<evidence type="ECO:0000255" key="3">
    <source>
        <dbReference type="PROSITE-ProRule" id="PRU00967"/>
    </source>
</evidence>
<evidence type="ECO:0000255" key="4">
    <source>
        <dbReference type="PROSITE-ProRule" id="PRU00968"/>
    </source>
</evidence>
<reference key="1">
    <citation type="journal article" date="1998" name="Mol. Biol. Evol.">
        <title>Body size effects and rates of cytochrome-b evolution in tube-nosed seabirds.</title>
        <authorList>
            <person name="Nunn G.B."/>
            <person name="Stanley S.E."/>
        </authorList>
    </citation>
    <scope>NUCLEOTIDE SEQUENCE [GENOMIC DNA]</scope>
    <source>
        <strain>Isolate GBSP-1</strain>
    </source>
</reference>